<accession>Q5B3I8</accession>
<accession>C8V9S5</accession>
<reference key="1">
    <citation type="journal article" date="2005" name="Nature">
        <title>Sequencing of Aspergillus nidulans and comparative analysis with A. fumigatus and A. oryzae.</title>
        <authorList>
            <person name="Galagan J.E."/>
            <person name="Calvo S.E."/>
            <person name="Cuomo C."/>
            <person name="Ma L.-J."/>
            <person name="Wortman J.R."/>
            <person name="Batzoglou S."/>
            <person name="Lee S.-I."/>
            <person name="Bastuerkmen M."/>
            <person name="Spevak C.C."/>
            <person name="Clutterbuck J."/>
            <person name="Kapitonov V."/>
            <person name="Jurka J."/>
            <person name="Scazzocchio C."/>
            <person name="Farman M.L."/>
            <person name="Butler J."/>
            <person name="Purcell S."/>
            <person name="Harris S."/>
            <person name="Braus G.H."/>
            <person name="Draht O."/>
            <person name="Busch S."/>
            <person name="D'Enfert C."/>
            <person name="Bouchier C."/>
            <person name="Goldman G.H."/>
            <person name="Bell-Pedersen D."/>
            <person name="Griffiths-Jones S."/>
            <person name="Doonan J.H."/>
            <person name="Yu J."/>
            <person name="Vienken K."/>
            <person name="Pain A."/>
            <person name="Freitag M."/>
            <person name="Selker E.U."/>
            <person name="Archer D.B."/>
            <person name="Penalva M.A."/>
            <person name="Oakley B.R."/>
            <person name="Momany M."/>
            <person name="Tanaka T."/>
            <person name="Kumagai T."/>
            <person name="Asai K."/>
            <person name="Machida M."/>
            <person name="Nierman W.C."/>
            <person name="Denning D.W."/>
            <person name="Caddick M.X."/>
            <person name="Hynes M."/>
            <person name="Paoletti M."/>
            <person name="Fischer R."/>
            <person name="Miller B.L."/>
            <person name="Dyer P.S."/>
            <person name="Sachs M.S."/>
            <person name="Osmani S.A."/>
            <person name="Birren B.W."/>
        </authorList>
    </citation>
    <scope>NUCLEOTIDE SEQUENCE [LARGE SCALE GENOMIC DNA]</scope>
    <source>
        <strain>FGSC A4 / ATCC 38163 / CBS 112.46 / NRRL 194 / M139</strain>
    </source>
</reference>
<reference key="2">
    <citation type="journal article" date="2009" name="Fungal Genet. Biol.">
        <title>The 2008 update of the Aspergillus nidulans genome annotation: a community effort.</title>
        <authorList>
            <person name="Wortman J.R."/>
            <person name="Gilsenan J.M."/>
            <person name="Joardar V."/>
            <person name="Deegan J."/>
            <person name="Clutterbuck J."/>
            <person name="Andersen M.R."/>
            <person name="Archer D."/>
            <person name="Bencina M."/>
            <person name="Braus G."/>
            <person name="Coutinho P."/>
            <person name="von Dohren H."/>
            <person name="Doonan J."/>
            <person name="Driessen A.J."/>
            <person name="Durek P."/>
            <person name="Espeso E."/>
            <person name="Fekete E."/>
            <person name="Flipphi M."/>
            <person name="Estrada C.G."/>
            <person name="Geysens S."/>
            <person name="Goldman G."/>
            <person name="de Groot P.W."/>
            <person name="Hansen K."/>
            <person name="Harris S.D."/>
            <person name="Heinekamp T."/>
            <person name="Helmstaedt K."/>
            <person name="Henrissat B."/>
            <person name="Hofmann G."/>
            <person name="Homan T."/>
            <person name="Horio T."/>
            <person name="Horiuchi H."/>
            <person name="James S."/>
            <person name="Jones M."/>
            <person name="Karaffa L."/>
            <person name="Karanyi Z."/>
            <person name="Kato M."/>
            <person name="Keller N."/>
            <person name="Kelly D.E."/>
            <person name="Kiel J.A."/>
            <person name="Kim J.M."/>
            <person name="van der Klei I.J."/>
            <person name="Klis F.M."/>
            <person name="Kovalchuk A."/>
            <person name="Krasevec N."/>
            <person name="Kubicek C.P."/>
            <person name="Liu B."/>
            <person name="Maccabe A."/>
            <person name="Meyer V."/>
            <person name="Mirabito P."/>
            <person name="Miskei M."/>
            <person name="Mos M."/>
            <person name="Mullins J."/>
            <person name="Nelson D.R."/>
            <person name="Nielsen J."/>
            <person name="Oakley B.R."/>
            <person name="Osmani S.A."/>
            <person name="Pakula T."/>
            <person name="Paszewski A."/>
            <person name="Paulsen I."/>
            <person name="Pilsyk S."/>
            <person name="Pocsi I."/>
            <person name="Punt P.J."/>
            <person name="Ram A.F."/>
            <person name="Ren Q."/>
            <person name="Robellet X."/>
            <person name="Robson G."/>
            <person name="Seiboth B."/>
            <person name="van Solingen P."/>
            <person name="Specht T."/>
            <person name="Sun J."/>
            <person name="Taheri-Talesh N."/>
            <person name="Takeshita N."/>
            <person name="Ussery D."/>
            <person name="vanKuyk P.A."/>
            <person name="Visser H."/>
            <person name="van de Vondervoort P.J."/>
            <person name="de Vries R.P."/>
            <person name="Walton J."/>
            <person name="Xiang X."/>
            <person name="Xiong Y."/>
            <person name="Zeng A.P."/>
            <person name="Brandt B.W."/>
            <person name="Cornell M.J."/>
            <person name="van den Hondel C.A."/>
            <person name="Visser J."/>
            <person name="Oliver S.G."/>
            <person name="Turner G."/>
        </authorList>
    </citation>
    <scope>GENOME REANNOTATION</scope>
    <source>
        <strain>FGSC A4 / ATCC 38163 / CBS 112.46 / NRRL 194 / M139</strain>
    </source>
</reference>
<dbReference type="EMBL" id="AACD01000084">
    <property type="protein sequence ID" value="EAA60970.1"/>
    <property type="status" value="ALT_SEQ"/>
    <property type="molecule type" value="Genomic_DNA"/>
</dbReference>
<dbReference type="EMBL" id="BN001303">
    <property type="protein sequence ID" value="CBF76536.1"/>
    <property type="molecule type" value="Genomic_DNA"/>
</dbReference>
<dbReference type="RefSeq" id="XP_662496.1">
    <property type="nucleotide sequence ID" value="XM_657404.1"/>
</dbReference>
<dbReference type="SMR" id="Q5B3I8"/>
<dbReference type="FunCoup" id="Q5B3I8">
    <property type="interactions" value="1158"/>
</dbReference>
<dbReference type="STRING" id="227321.Q5B3I8"/>
<dbReference type="EnsemblFungi" id="CBF76536">
    <property type="protein sequence ID" value="CBF76536"/>
    <property type="gene ID" value="ANIA_04892"/>
</dbReference>
<dbReference type="eggNOG" id="KOG1914">
    <property type="taxonomic scope" value="Eukaryota"/>
</dbReference>
<dbReference type="HOGENOM" id="CLU_007630_1_1_1"/>
<dbReference type="InParanoid" id="Q5B3I8"/>
<dbReference type="OMA" id="VQLWSVY"/>
<dbReference type="OrthoDB" id="26282at2759"/>
<dbReference type="Proteomes" id="UP000000560">
    <property type="component" value="Chromosome III"/>
</dbReference>
<dbReference type="GO" id="GO:0005737">
    <property type="term" value="C:cytoplasm"/>
    <property type="evidence" value="ECO:0007669"/>
    <property type="project" value="UniProtKB-SubCell"/>
</dbReference>
<dbReference type="GO" id="GO:0005634">
    <property type="term" value="C:nucleus"/>
    <property type="evidence" value="ECO:0000318"/>
    <property type="project" value="GO_Central"/>
</dbReference>
<dbReference type="GO" id="GO:0003729">
    <property type="term" value="F:mRNA binding"/>
    <property type="evidence" value="ECO:0000318"/>
    <property type="project" value="GO_Central"/>
</dbReference>
<dbReference type="GO" id="GO:0031124">
    <property type="term" value="P:mRNA 3'-end processing"/>
    <property type="evidence" value="ECO:0007669"/>
    <property type="project" value="InterPro"/>
</dbReference>
<dbReference type="GO" id="GO:0031123">
    <property type="term" value="P:RNA 3'-end processing"/>
    <property type="evidence" value="ECO:0000318"/>
    <property type="project" value="GO_Central"/>
</dbReference>
<dbReference type="FunFam" id="1.25.40.1040:FF:000006">
    <property type="entry name" value="CFIA complex component Rna14, putative"/>
    <property type="match status" value="1"/>
</dbReference>
<dbReference type="Gene3D" id="1.25.40.1040">
    <property type="match status" value="1"/>
</dbReference>
<dbReference type="InterPro" id="IPR003107">
    <property type="entry name" value="HAT"/>
</dbReference>
<dbReference type="InterPro" id="IPR045243">
    <property type="entry name" value="Rna14-like"/>
</dbReference>
<dbReference type="InterPro" id="IPR008847">
    <property type="entry name" value="Suf"/>
</dbReference>
<dbReference type="InterPro" id="IPR011990">
    <property type="entry name" value="TPR-like_helical_dom_sf"/>
</dbReference>
<dbReference type="PANTHER" id="PTHR19980:SF0">
    <property type="entry name" value="CLEAVAGE STIMULATION FACTOR SUBUNIT 3"/>
    <property type="match status" value="1"/>
</dbReference>
<dbReference type="PANTHER" id="PTHR19980">
    <property type="entry name" value="RNA CLEAVAGE STIMULATION FACTOR"/>
    <property type="match status" value="1"/>
</dbReference>
<dbReference type="Pfam" id="PF05843">
    <property type="entry name" value="Suf"/>
    <property type="match status" value="1"/>
</dbReference>
<dbReference type="SMART" id="SM00386">
    <property type="entry name" value="HAT"/>
    <property type="match status" value="6"/>
</dbReference>
<dbReference type="SUPFAM" id="SSF48452">
    <property type="entry name" value="TPR-like"/>
    <property type="match status" value="2"/>
</dbReference>
<keyword id="KW-0963">Cytoplasm</keyword>
<keyword id="KW-0507">mRNA processing</keyword>
<keyword id="KW-0539">Nucleus</keyword>
<keyword id="KW-1185">Reference proteome</keyword>
<keyword id="KW-0677">Repeat</keyword>
<sequence length="1075" mass="120475">MAEDDAEKAFFEAQAMNAGSMGYNGAEDQNANASDSDEYDPSSTLQDQYPAPSENLQLQETDTPTSVSQPQPSFREDADPAGNAHPSQPPSRPESQASTSVPATGVSVQPKTRTIGGFVVEDEDEDDAGDADYEPPAVLGVEDMNIIPSQPIPGNANEATSTPDVSLDEAAQESASAKNVPNSSLSSVSLAFKNDGSMDLGQNLYNSRTSLQPEIARESATATPAPDSPSTAKGRLPHDRVGILEDRIREDPRGDIPAWLELINEHRSRNRIDSARDVYERFLKVFPLSAEMWVAYATMESELNELFRLEQIFNRTLLTIPAVQLWTVYLDYVRRRNPLSTDTTGQARKVISSAYELALQHIGMDKESGSIWADYIQFIRSGPGNVGGSGWQDQQKMDLLRKAYQRAICVPMQAVNTLWKEYDQFEMGLNKLTGRKFLQEQSPSYMTARSSYTELQNFTRDLNRTTLPRLPPVPGSEGDFEYLQQIEIWKRWINWEKGDPLVLKEDDLTAYKGRVVYVYKQALMALRFLPEIWFEAADFCFLNDMETEGNEFLKNGIDANPESCLLAFKRADRLEITSESEQDPIKRGAKVREPYDRLLDALYDLIAKARTREAQDVARLEETFKLRPDTQPAANDDDDDDQSETKAKESVKNAQIEAVRHAHSIQIGILSKTVSFAWIALMRAMRRIQGKGKPGEVPGSRQVFADARKRGRITSDVYIASALIEYHCYKDPAATKIFERGAKLFPEDENFALEYLKHLIDINDIINARAVFEMTVRKLAANPENVHKTKPIFAFLHEYESRYGDLVQVINLETRMRELFPDDPTLEQFAHRFSAPNFDPTTFRPIISPSQTRPKTVYPGGQVPSRHGTPSSRFPEASVTNSPKRPLEDFDDDMSRPRKFVRGESPLRTTTQRRQLDQQKRTQTALQVPSSGSQYRSQGSPAPLPRDIVYLLSVIPPASTYTAGRFSAEKMIDLVRRLDLPASISQIPLPQSARGLGTGQTTIGGQQFSDDGGYYYKGGVVDMCALHFMDDGVFRLYVAGLAGNILARILFFGSGGLLAYLLRTVQIWDPEIPRR</sequence>
<gene>
    <name type="primary">rna14</name>
    <name type="ORF">AN4892</name>
</gene>
<protein>
    <recommendedName>
        <fullName>mRNA 3'-end-processing protein rna14</fullName>
    </recommendedName>
</protein>
<comment type="function">
    <text evidence="1">Component of the cleavage factor IA (CFIA) complex, which is involved in the endonucleolytic cleavage during polyadenylation-dependent pre-mRNA 3'-end formation.</text>
</comment>
<comment type="subcellular location">
    <subcellularLocation>
        <location evidence="1">Nucleus</location>
    </subcellularLocation>
    <subcellularLocation>
        <location evidence="1">Cytoplasm</location>
    </subcellularLocation>
    <text evidence="1">Nucleus and/or cytoplasm.</text>
</comment>
<comment type="sequence caution" evidence="3">
    <conflict type="erroneous gene model prediction">
        <sequence resource="EMBL-CDS" id="EAA60970"/>
    </conflict>
</comment>
<organism>
    <name type="scientific">Emericella nidulans (strain FGSC A4 / ATCC 38163 / CBS 112.46 / NRRL 194 / M139)</name>
    <name type="common">Aspergillus nidulans</name>
    <dbReference type="NCBI Taxonomy" id="227321"/>
    <lineage>
        <taxon>Eukaryota</taxon>
        <taxon>Fungi</taxon>
        <taxon>Dikarya</taxon>
        <taxon>Ascomycota</taxon>
        <taxon>Pezizomycotina</taxon>
        <taxon>Eurotiomycetes</taxon>
        <taxon>Eurotiomycetidae</taxon>
        <taxon>Eurotiales</taxon>
        <taxon>Aspergillaceae</taxon>
        <taxon>Aspergillus</taxon>
        <taxon>Aspergillus subgen. Nidulantes</taxon>
    </lineage>
</organism>
<proteinExistence type="inferred from homology"/>
<feature type="chain" id="PRO_0000238524" description="mRNA 3'-end-processing protein rna14">
    <location>
        <begin position="1"/>
        <end position="1075"/>
    </location>
</feature>
<feature type="repeat" description="HAT 1">
    <location>
        <begin position="270"/>
        <end position="302"/>
    </location>
</feature>
<feature type="repeat" description="HAT 2">
    <location>
        <begin position="304"/>
        <end position="335"/>
    </location>
</feature>
<feature type="repeat" description="HAT 3">
    <location>
        <begin position="346"/>
        <end position="381"/>
    </location>
</feature>
<feature type="repeat" description="HAT 4">
    <location>
        <begin position="395"/>
        <end position="428"/>
    </location>
</feature>
<feature type="repeat" description="HAT 5">
    <location>
        <begin position="465"/>
        <end position="498"/>
    </location>
</feature>
<feature type="repeat" description="HAT 6">
    <location>
        <begin position="510"/>
        <end position="542"/>
    </location>
</feature>
<feature type="region of interest" description="Disordered" evidence="2">
    <location>
        <begin position="20"/>
        <end position="185"/>
    </location>
</feature>
<feature type="region of interest" description="Disordered" evidence="2">
    <location>
        <begin position="215"/>
        <end position="237"/>
    </location>
</feature>
<feature type="region of interest" description="Disordered" evidence="2">
    <location>
        <begin position="621"/>
        <end position="653"/>
    </location>
</feature>
<feature type="region of interest" description="Disordered" evidence="2">
    <location>
        <begin position="840"/>
        <end position="941"/>
    </location>
</feature>
<feature type="compositionally biased region" description="Polar residues" evidence="2">
    <location>
        <begin position="54"/>
        <end position="72"/>
    </location>
</feature>
<feature type="compositionally biased region" description="Polar residues" evidence="2">
    <location>
        <begin position="93"/>
        <end position="112"/>
    </location>
</feature>
<feature type="compositionally biased region" description="Acidic residues" evidence="2">
    <location>
        <begin position="120"/>
        <end position="133"/>
    </location>
</feature>
<feature type="compositionally biased region" description="Polar residues" evidence="2">
    <location>
        <begin position="868"/>
        <end position="883"/>
    </location>
</feature>
<feature type="compositionally biased region" description="Basic and acidic residues" evidence="2">
    <location>
        <begin position="885"/>
        <end position="896"/>
    </location>
</feature>
<feature type="compositionally biased region" description="Polar residues" evidence="2">
    <location>
        <begin position="925"/>
        <end position="940"/>
    </location>
</feature>
<name>RNA14_EMENI</name>
<evidence type="ECO:0000250" key="1"/>
<evidence type="ECO:0000256" key="2">
    <source>
        <dbReference type="SAM" id="MobiDB-lite"/>
    </source>
</evidence>
<evidence type="ECO:0000305" key="3"/>